<proteinExistence type="predicted"/>
<feature type="chain" id="PRO_0000423884" description="Protein ORF10">
    <location>
        <begin position="1"/>
        <end position="418"/>
    </location>
</feature>
<gene>
    <name type="primary">ORF10</name>
</gene>
<sequence>MQTEATFILGDWEITVSNCRFTCSSLTCGPLYRSSGDYTRLRIPFSLDRLIRDHAIFGLVPNIEDLLTHGSCVAVVADANATGGNARRIVAPGVINNFSEPIGIWVRGPPPQTRKEAIKFCIFFVSPLPPREMTTYVFKGGDLPPGAEEPETLHSAEAPLPSRETLVTGQLRSTSPRTYTGYFHSPVPLSFLDLLTFESMGCENVEGDPEPLTPKYLTFTQTGERLYKVTVHNTHSTACKKARIRFVYRPTPSARQLVMGQASPLITTPLGARVFAVYPDCEKTIPPQETTTLRIQLLFEQHGANAGECAFVIMGLARETKFVSFPAVLLPGKHEHLTVFNPQTHPLTIQRDTIVGVAMACYIHPGKAASQAPYSFYDCKEESWHVGLFQIKHGPGGVCTPPCHVAIRADRHEEPMQS</sequence>
<reference key="1">
    <citation type="journal article" date="1999" name="J. Virol.">
        <title>Identification of a spliced gene from Kaposi's sarcoma-associated herpesvirus encoding a protein with similarities to latent membrane proteins 1 and 2A of Epstein-Barr virus.</title>
        <authorList>
            <person name="Glenn M."/>
            <person name="Rainbow L."/>
            <person name="Aurade F."/>
            <person name="Davison A."/>
            <person name="Schulz T.F."/>
        </authorList>
    </citation>
    <scope>NUCLEOTIDE SEQUENCE [LARGE SCALE GENOMIC DNA]</scope>
</reference>
<reference key="2">
    <citation type="journal article" date="2006" name="J. Gen. Virol.">
        <title>Kaposi's sarcoma-associated herpesvirus immune modulation: an overview.</title>
        <authorList>
            <person name="Rezaee S.A.R."/>
            <person name="Cunningham C."/>
            <person name="Davison A.J."/>
            <person name="Blackbourn D.J."/>
        </authorList>
    </citation>
    <scope>NUCLEOTIDE SEQUENCE [LARGE SCALE GENOMIC DNA]</scope>
</reference>
<protein>
    <recommendedName>
        <fullName>Protein ORF10</fullName>
    </recommendedName>
</protein>
<dbReference type="EMBL" id="AF148805">
    <property type="protein sequence ID" value="ABD28854.1"/>
    <property type="molecule type" value="Genomic_DNA"/>
</dbReference>
<dbReference type="RefSeq" id="YP_001129356.1">
    <property type="nucleotide sequence ID" value="NC_009333.1"/>
</dbReference>
<dbReference type="SMR" id="Q2HRC9"/>
<dbReference type="BioGRID" id="1776959">
    <property type="interactions" value="21"/>
</dbReference>
<dbReference type="DNASU" id="4961456"/>
<dbReference type="GeneID" id="4961456"/>
<dbReference type="KEGG" id="vg:4961456"/>
<dbReference type="Proteomes" id="UP000000942">
    <property type="component" value="Segment"/>
</dbReference>
<dbReference type="InterPro" id="IPR006882">
    <property type="entry name" value="Herpes_Orf11"/>
</dbReference>
<dbReference type="Pfam" id="PF04797">
    <property type="entry name" value="Herpes_ORF11"/>
    <property type="match status" value="1"/>
</dbReference>
<name>ORF10_HHV8P</name>
<keyword id="KW-1185">Reference proteome</keyword>
<organism>
    <name type="scientific">Human herpesvirus 8 type P (isolate GK18)</name>
    <name type="common">HHV-8</name>
    <name type="synonym">Kaposi's sarcoma-associated herpesvirus</name>
    <dbReference type="NCBI Taxonomy" id="868565"/>
    <lineage>
        <taxon>Viruses</taxon>
        <taxon>Duplodnaviria</taxon>
        <taxon>Heunggongvirae</taxon>
        <taxon>Peploviricota</taxon>
        <taxon>Herviviricetes</taxon>
        <taxon>Herpesvirales</taxon>
        <taxon>Orthoherpesviridae</taxon>
        <taxon>Gammaherpesvirinae</taxon>
        <taxon>Rhadinovirus</taxon>
        <taxon>Rhadinovirus humangamma8</taxon>
        <taxon>Human herpesvirus 8</taxon>
    </lineage>
</organism>
<accession>Q2HRC9</accession>
<organismHost>
    <name type="scientific">Homo sapiens</name>
    <name type="common">Human</name>
    <dbReference type="NCBI Taxonomy" id="9606"/>
</organismHost>